<keyword id="KW-0687">Ribonucleoprotein</keyword>
<keyword id="KW-0689">Ribosomal protein</keyword>
<keyword id="KW-0694">RNA-binding</keyword>
<keyword id="KW-0699">rRNA-binding</keyword>
<accession>A5W9R5</accession>
<organism>
    <name type="scientific">Pseudomonas putida (strain ATCC 700007 / DSM 6899 / JCM 31910 / BCRC 17059 / LMG 24140 / F1)</name>
    <dbReference type="NCBI Taxonomy" id="351746"/>
    <lineage>
        <taxon>Bacteria</taxon>
        <taxon>Pseudomonadati</taxon>
        <taxon>Pseudomonadota</taxon>
        <taxon>Gammaproteobacteria</taxon>
        <taxon>Pseudomonadales</taxon>
        <taxon>Pseudomonadaceae</taxon>
        <taxon>Pseudomonas</taxon>
    </lineage>
</organism>
<comment type="function">
    <text evidence="1">Binds to the 23S rRNA.</text>
</comment>
<comment type="similarity">
    <text evidence="1">Belongs to the bacterial ribosomal protein bL9 family.</text>
</comment>
<name>RL9_PSEP1</name>
<sequence>MELILLEKVANLGNLGDKVKVKAGYGRNFLLPFGKATVANAANLAAFEERRAELEKAAADKKASAESRAAQLAELEVTITATAGDEGKLFGSIGTHDIADALTASGVEVAKAEVRLPNGTIRQVGEYDVAVHLHSDVEATVRVVVVAA</sequence>
<evidence type="ECO:0000255" key="1">
    <source>
        <dbReference type="HAMAP-Rule" id="MF_00503"/>
    </source>
</evidence>
<evidence type="ECO:0000305" key="2"/>
<feature type="chain" id="PRO_1000014840" description="Large ribosomal subunit protein bL9">
    <location>
        <begin position="1"/>
        <end position="148"/>
    </location>
</feature>
<proteinExistence type="inferred from homology"/>
<gene>
    <name evidence="1" type="primary">rplI</name>
    <name type="ordered locus">Pput_4755</name>
</gene>
<dbReference type="EMBL" id="CP000712">
    <property type="protein sequence ID" value="ABQ80875.1"/>
    <property type="molecule type" value="Genomic_DNA"/>
</dbReference>
<dbReference type="SMR" id="A5W9R5"/>
<dbReference type="KEGG" id="ppf:Pput_4755"/>
<dbReference type="eggNOG" id="COG0359">
    <property type="taxonomic scope" value="Bacteria"/>
</dbReference>
<dbReference type="HOGENOM" id="CLU_078938_4_1_6"/>
<dbReference type="GO" id="GO:1990904">
    <property type="term" value="C:ribonucleoprotein complex"/>
    <property type="evidence" value="ECO:0007669"/>
    <property type="project" value="UniProtKB-KW"/>
</dbReference>
<dbReference type="GO" id="GO:0005840">
    <property type="term" value="C:ribosome"/>
    <property type="evidence" value="ECO:0007669"/>
    <property type="project" value="UniProtKB-KW"/>
</dbReference>
<dbReference type="GO" id="GO:0019843">
    <property type="term" value="F:rRNA binding"/>
    <property type="evidence" value="ECO:0007669"/>
    <property type="project" value="UniProtKB-UniRule"/>
</dbReference>
<dbReference type="GO" id="GO:0003735">
    <property type="term" value="F:structural constituent of ribosome"/>
    <property type="evidence" value="ECO:0007669"/>
    <property type="project" value="InterPro"/>
</dbReference>
<dbReference type="GO" id="GO:0006412">
    <property type="term" value="P:translation"/>
    <property type="evidence" value="ECO:0007669"/>
    <property type="project" value="UniProtKB-UniRule"/>
</dbReference>
<dbReference type="Gene3D" id="3.10.430.100">
    <property type="entry name" value="Ribosomal protein L9, C-terminal domain"/>
    <property type="match status" value="1"/>
</dbReference>
<dbReference type="Gene3D" id="3.40.5.10">
    <property type="entry name" value="Ribosomal protein L9, N-terminal domain"/>
    <property type="match status" value="1"/>
</dbReference>
<dbReference type="HAMAP" id="MF_00503">
    <property type="entry name" value="Ribosomal_bL9"/>
    <property type="match status" value="1"/>
</dbReference>
<dbReference type="InterPro" id="IPR000244">
    <property type="entry name" value="Ribosomal_bL9"/>
</dbReference>
<dbReference type="InterPro" id="IPR009027">
    <property type="entry name" value="Ribosomal_bL9/RNase_H1_N"/>
</dbReference>
<dbReference type="InterPro" id="IPR020594">
    <property type="entry name" value="Ribosomal_bL9_bac/chp"/>
</dbReference>
<dbReference type="InterPro" id="IPR020069">
    <property type="entry name" value="Ribosomal_bL9_C"/>
</dbReference>
<dbReference type="InterPro" id="IPR036791">
    <property type="entry name" value="Ribosomal_bL9_C_sf"/>
</dbReference>
<dbReference type="InterPro" id="IPR020070">
    <property type="entry name" value="Ribosomal_bL9_N"/>
</dbReference>
<dbReference type="InterPro" id="IPR036935">
    <property type="entry name" value="Ribosomal_bL9_N_sf"/>
</dbReference>
<dbReference type="NCBIfam" id="TIGR00158">
    <property type="entry name" value="L9"/>
    <property type="match status" value="1"/>
</dbReference>
<dbReference type="PANTHER" id="PTHR21368">
    <property type="entry name" value="50S RIBOSOMAL PROTEIN L9"/>
    <property type="match status" value="1"/>
</dbReference>
<dbReference type="Pfam" id="PF03948">
    <property type="entry name" value="Ribosomal_L9_C"/>
    <property type="match status" value="1"/>
</dbReference>
<dbReference type="Pfam" id="PF01281">
    <property type="entry name" value="Ribosomal_L9_N"/>
    <property type="match status" value="1"/>
</dbReference>
<dbReference type="SUPFAM" id="SSF55658">
    <property type="entry name" value="L9 N-domain-like"/>
    <property type="match status" value="1"/>
</dbReference>
<dbReference type="SUPFAM" id="SSF55653">
    <property type="entry name" value="Ribosomal protein L9 C-domain"/>
    <property type="match status" value="1"/>
</dbReference>
<dbReference type="PROSITE" id="PS00651">
    <property type="entry name" value="RIBOSOMAL_L9"/>
    <property type="match status" value="1"/>
</dbReference>
<reference key="1">
    <citation type="submission" date="2007-05" db="EMBL/GenBank/DDBJ databases">
        <title>Complete sequence of Pseudomonas putida F1.</title>
        <authorList>
            <consortium name="US DOE Joint Genome Institute"/>
            <person name="Copeland A."/>
            <person name="Lucas S."/>
            <person name="Lapidus A."/>
            <person name="Barry K."/>
            <person name="Detter J.C."/>
            <person name="Glavina del Rio T."/>
            <person name="Hammon N."/>
            <person name="Israni S."/>
            <person name="Dalin E."/>
            <person name="Tice H."/>
            <person name="Pitluck S."/>
            <person name="Chain P."/>
            <person name="Malfatti S."/>
            <person name="Shin M."/>
            <person name="Vergez L."/>
            <person name="Schmutz J."/>
            <person name="Larimer F."/>
            <person name="Land M."/>
            <person name="Hauser L."/>
            <person name="Kyrpides N."/>
            <person name="Lykidis A."/>
            <person name="Parales R."/>
            <person name="Richardson P."/>
        </authorList>
    </citation>
    <scope>NUCLEOTIDE SEQUENCE [LARGE SCALE GENOMIC DNA]</scope>
    <source>
        <strain>ATCC 700007 / DSM 6899 / JCM 31910 / BCRC 17059 / LMG 24140 / F1</strain>
    </source>
</reference>
<protein>
    <recommendedName>
        <fullName evidence="1">Large ribosomal subunit protein bL9</fullName>
    </recommendedName>
    <alternativeName>
        <fullName evidence="2">50S ribosomal protein L9</fullName>
    </alternativeName>
</protein>